<organism>
    <name type="scientific">Bos taurus</name>
    <name type="common">Bovine</name>
    <dbReference type="NCBI Taxonomy" id="9913"/>
    <lineage>
        <taxon>Eukaryota</taxon>
        <taxon>Metazoa</taxon>
        <taxon>Chordata</taxon>
        <taxon>Craniata</taxon>
        <taxon>Vertebrata</taxon>
        <taxon>Euteleostomi</taxon>
        <taxon>Mammalia</taxon>
        <taxon>Eutheria</taxon>
        <taxon>Laurasiatheria</taxon>
        <taxon>Artiodactyla</taxon>
        <taxon>Ruminantia</taxon>
        <taxon>Pecora</taxon>
        <taxon>Bovidae</taxon>
        <taxon>Bovinae</taxon>
        <taxon>Bos</taxon>
    </lineage>
</organism>
<gene>
    <name type="primary">PAOX</name>
    <name type="synonym">PAO</name>
</gene>
<sequence length="512" mass="56325">MQSGGRQAEAPGRGPRVLVVGGGIAGLGAAQRLCRHPAFSHLRVLEATARAGGRIRSEHSFGGVVEVGAHWIHGPSQGNPVFQLAAKYGLLGEKALSEENQLIETGGHVGLPSVSYASSGVSVSLELVAEMASLFYSLIDQTREFLQAAETTPPSVGEYLKEKIRQHMAGWTEDEETKKLKLAILKNLFNVECCVSGTHSMDLVALAPFGEYTVLPGLDCTFPEGYQGLTDCIMASLPKDVMVFDKPVKTIHWNGSFREASAPGETFPVLVECEDGDCFPAHHVVVTVPLGFFKKHLDTFFEPPLPTEKVEAIRKIGFGTNNKIFLEFEEPFWEPDCQHIQVVWEDMSPLEDTAPELQDAWFKKLIGFWVLPPFQASHVLCGFIAGLESEFMETLSDEDVLRSLTQVLRRVTGNPQLPAPRSMLRSCWHSAPYTRGSYSYVAVGSSGDDMDRLAQPLPSDGKGAQLQVLFAGEATHRTFYSTTHGALLSGWREADRLMTLWDPQAQWPEPRL</sequence>
<keyword id="KW-0007">Acetylation</keyword>
<keyword id="KW-0963">Cytoplasm</keyword>
<keyword id="KW-0903">Direct protein sequencing</keyword>
<keyword id="KW-0274">FAD</keyword>
<keyword id="KW-0285">Flavoprotein</keyword>
<keyword id="KW-0560">Oxidoreductase</keyword>
<keyword id="KW-0576">Peroxisome</keyword>
<keyword id="KW-1185">Reference proteome</keyword>
<protein>
    <recommendedName>
        <fullName>Peroxisomal N(1)-acetyl-spermine/spermidine oxidase</fullName>
        <ecNumber evidence="3">1.5.3.13</ecNumber>
    </recommendedName>
    <alternativeName>
        <fullName>Polyamine oxidase</fullName>
    </alternativeName>
</protein>
<proteinExistence type="evidence at protein level"/>
<feature type="propeptide" id="PRO_0000236802" evidence="5">
    <location>
        <begin position="1"/>
        <end position="6"/>
    </location>
</feature>
<feature type="chain" id="PRO_0000099874" description="Peroxisomal N(1)-acetyl-spermine/spermidine oxidase">
    <location>
        <begin position="7"/>
        <end position="512"/>
    </location>
</feature>
<feature type="short sequence motif" description="Microbody targeting signal" evidence="4">
    <location>
        <begin position="510"/>
        <end position="512"/>
    </location>
</feature>
<feature type="binding site" evidence="3">
    <location>
        <position position="25"/>
    </location>
    <ligand>
        <name>FAD</name>
        <dbReference type="ChEBI" id="CHEBI:57692"/>
    </ligand>
</feature>
<feature type="binding site" evidence="3">
    <location>
        <position position="46"/>
    </location>
    <ligand>
        <name>FAD</name>
        <dbReference type="ChEBI" id="CHEBI:57692"/>
    </ligand>
</feature>
<feature type="binding site" evidence="3">
    <location>
        <position position="54"/>
    </location>
    <ligand>
        <name>FAD</name>
        <dbReference type="ChEBI" id="CHEBI:57692"/>
    </ligand>
</feature>
<feature type="binding site" evidence="3">
    <location>
        <begin position="70"/>
        <end position="71"/>
    </location>
    <ligand>
        <name>FAD</name>
        <dbReference type="ChEBI" id="CHEBI:57692"/>
    </ligand>
</feature>
<feature type="binding site" evidence="3">
    <location>
        <position position="73"/>
    </location>
    <ligand>
        <name>substrate</name>
    </ligand>
</feature>
<feature type="binding site" evidence="3">
    <location>
        <position position="195"/>
    </location>
    <ligand>
        <name>substrate</name>
    </ligand>
</feature>
<feature type="binding site" evidence="3">
    <location>
        <position position="248"/>
    </location>
    <ligand>
        <name>FAD</name>
        <dbReference type="ChEBI" id="CHEBI:57692"/>
    </ligand>
</feature>
<feature type="binding site" evidence="3">
    <location>
        <position position="321"/>
    </location>
    <ligand>
        <name>substrate</name>
    </ligand>
</feature>
<feature type="binding site" evidence="3">
    <location>
        <position position="473"/>
    </location>
    <ligand>
        <name>FAD</name>
        <dbReference type="ChEBI" id="CHEBI:57692"/>
    </ligand>
</feature>
<feature type="binding site" evidence="3">
    <location>
        <begin position="482"/>
        <end position="483"/>
    </location>
    <ligand>
        <name>FAD</name>
        <dbReference type="ChEBI" id="CHEBI:57692"/>
    </ligand>
</feature>
<feature type="modified residue" description="N-acetylmethionine" evidence="2">
    <location>
        <position position="1"/>
    </location>
</feature>
<feature type="sequence conflict" description="In Ref. 2; AA sequence." evidence="6" ref="2">
    <original>Q</original>
    <variation>E</variation>
    <location>
        <position position="7"/>
    </location>
</feature>
<feature type="sequence conflict" description="In Ref. 2; AAN40707." evidence="6" ref="2">
    <original>T</original>
    <variation>P</variation>
    <location>
        <position position="482"/>
    </location>
</feature>
<evidence type="ECO:0000250" key="1"/>
<evidence type="ECO:0000250" key="2">
    <source>
        <dbReference type="UniProtKB" id="Q6QHF9"/>
    </source>
</evidence>
<evidence type="ECO:0000250" key="3">
    <source>
        <dbReference type="UniProtKB" id="Q8C0L6"/>
    </source>
</evidence>
<evidence type="ECO:0000255" key="4"/>
<evidence type="ECO:0000269" key="5">
    <source>
    </source>
</evidence>
<evidence type="ECO:0000305" key="6"/>
<accession>Q865R1</accession>
<accession>Q4PS79</accession>
<comment type="function">
    <text evidence="3">Flavoenzyme which catalyzes the oxidation of N(1)-acetylspermine to spermidine and is thus involved in the polyamine back-conversion. Can also oxidize N(1)-acetylspermidine to putrescine. Substrate specificity: N(1)-acetylspermine = N(1)-acetylspermidine &gt; N(1),N(12)-diacylspermine &gt;&gt; spermine. Does not oxidize spermidine. Plays an important role in the regulation of polyamine intracellular concentration.</text>
</comment>
<comment type="catalytic activity">
    <reaction evidence="3">
        <text>N(1)-acetylspermine + O2 + H2O = 3-acetamidopropanal + spermidine + H2O2</text>
        <dbReference type="Rhea" id="RHEA:25800"/>
        <dbReference type="ChEBI" id="CHEBI:15377"/>
        <dbReference type="ChEBI" id="CHEBI:15379"/>
        <dbReference type="ChEBI" id="CHEBI:16240"/>
        <dbReference type="ChEBI" id="CHEBI:30322"/>
        <dbReference type="ChEBI" id="CHEBI:57834"/>
        <dbReference type="ChEBI" id="CHEBI:58101"/>
        <dbReference type="EC" id="1.5.3.13"/>
    </reaction>
</comment>
<comment type="catalytic activity">
    <reaction evidence="3">
        <text>N(1)-acetylspermidine + O2 + H2O = 3-acetamidopropanal + putrescine + H2O2</text>
        <dbReference type="Rhea" id="RHEA:25812"/>
        <dbReference type="ChEBI" id="CHEBI:15377"/>
        <dbReference type="ChEBI" id="CHEBI:15379"/>
        <dbReference type="ChEBI" id="CHEBI:16240"/>
        <dbReference type="ChEBI" id="CHEBI:30322"/>
        <dbReference type="ChEBI" id="CHEBI:58324"/>
        <dbReference type="ChEBI" id="CHEBI:326268"/>
        <dbReference type="EC" id="1.5.3.13"/>
    </reaction>
</comment>
<comment type="catalytic activity">
    <reaction evidence="3">
        <text>N(1),N(12)-diacetylspermine + O2 + H2O = 3-acetamidopropanal + N(1)-acetylspermidine + H2O2</text>
        <dbReference type="Rhea" id="RHEA:25868"/>
        <dbReference type="ChEBI" id="CHEBI:15377"/>
        <dbReference type="ChEBI" id="CHEBI:15379"/>
        <dbReference type="ChEBI" id="CHEBI:16240"/>
        <dbReference type="ChEBI" id="CHEBI:30322"/>
        <dbReference type="ChEBI" id="CHEBI:58324"/>
        <dbReference type="ChEBI" id="CHEBI:58550"/>
        <dbReference type="EC" id="1.5.3.13"/>
    </reaction>
</comment>
<comment type="cofactor">
    <cofactor evidence="3">
        <name>FAD</name>
        <dbReference type="ChEBI" id="CHEBI:57692"/>
    </cofactor>
    <text evidence="3">Binds 1 FAD per subunit.</text>
</comment>
<comment type="pathway">
    <text evidence="3">Amine and polyamine metabolism; spermine metabolism.</text>
</comment>
<comment type="subunit">
    <text evidence="1">Monomer.</text>
</comment>
<comment type="subcellular location">
    <subcellularLocation>
        <location evidence="1">Peroxisome</location>
    </subcellularLocation>
    <subcellularLocation>
        <location evidence="1">Cytoplasm</location>
    </subcellularLocation>
</comment>
<comment type="miscellaneous">
    <text evidence="1">Oxidizes N(1)-acetylated polyamines on the exo-side of their N(4)-amino groups. Plant PAO oxidizes spermine on the endo-side of the N(4)-nitrogen (By similarity).</text>
</comment>
<comment type="similarity">
    <text evidence="6">Belongs to the flavin monoamine oxidase family.</text>
</comment>
<name>PAOX_BOVIN</name>
<dbReference type="EC" id="1.5.3.13" evidence="3"/>
<dbReference type="EMBL" id="DQ058607">
    <property type="protein sequence ID" value="AAY83881.1"/>
    <property type="molecule type" value="mRNA"/>
</dbReference>
<dbReference type="EMBL" id="DQ058602">
    <property type="protein sequence ID" value="AAY83877.1"/>
    <property type="molecule type" value="Genomic_DNA"/>
</dbReference>
<dbReference type="EMBL" id="AF226658">
    <property type="protein sequence ID" value="AAN40707.1"/>
    <property type="molecule type" value="mRNA"/>
</dbReference>
<dbReference type="RefSeq" id="NP_001013620.2">
    <property type="nucleotide sequence ID" value="NM_001013602.2"/>
</dbReference>
<dbReference type="SMR" id="Q865R1"/>
<dbReference type="FunCoup" id="Q865R1">
    <property type="interactions" value="1263"/>
</dbReference>
<dbReference type="STRING" id="9913.ENSBTAP00000048799"/>
<dbReference type="PaxDb" id="9913-ENSBTAP00000048799"/>
<dbReference type="GeneID" id="282639"/>
<dbReference type="KEGG" id="bta:282639"/>
<dbReference type="CTD" id="196743"/>
<dbReference type="eggNOG" id="KOG0685">
    <property type="taxonomic scope" value="Eukaryota"/>
</dbReference>
<dbReference type="InParanoid" id="Q865R1"/>
<dbReference type="OrthoDB" id="2019015at2759"/>
<dbReference type="UniPathway" id="UPA00826"/>
<dbReference type="Proteomes" id="UP000009136">
    <property type="component" value="Unplaced"/>
</dbReference>
<dbReference type="GO" id="GO:0005737">
    <property type="term" value="C:cytoplasm"/>
    <property type="evidence" value="ECO:0000318"/>
    <property type="project" value="GO_Central"/>
</dbReference>
<dbReference type="GO" id="GO:0005777">
    <property type="term" value="C:peroxisome"/>
    <property type="evidence" value="ECO:0007669"/>
    <property type="project" value="UniProtKB-SubCell"/>
</dbReference>
<dbReference type="GO" id="GO:0052903">
    <property type="term" value="F:N(1)-acetylpolyamine oxidase (3-acetamidopropanal-forming) activity"/>
    <property type="evidence" value="ECO:0007669"/>
    <property type="project" value="UniProtKB-EC"/>
</dbReference>
<dbReference type="GO" id="GO:0046592">
    <property type="term" value="F:polyamine oxidase activity"/>
    <property type="evidence" value="ECO:0000318"/>
    <property type="project" value="GO_Central"/>
</dbReference>
<dbReference type="GO" id="GO:0046203">
    <property type="term" value="P:spermidine catabolic process"/>
    <property type="evidence" value="ECO:0000318"/>
    <property type="project" value="GO_Central"/>
</dbReference>
<dbReference type="GO" id="GO:0008215">
    <property type="term" value="P:spermine metabolic process"/>
    <property type="evidence" value="ECO:0007669"/>
    <property type="project" value="UniProtKB-UniPathway"/>
</dbReference>
<dbReference type="FunFam" id="3.90.660.10:FF:000008">
    <property type="entry name" value="Spermine oxidase"/>
    <property type="match status" value="1"/>
</dbReference>
<dbReference type="Gene3D" id="3.90.660.10">
    <property type="match status" value="1"/>
</dbReference>
<dbReference type="Gene3D" id="3.50.50.60">
    <property type="entry name" value="FAD/NAD(P)-binding domain"/>
    <property type="match status" value="1"/>
</dbReference>
<dbReference type="InterPro" id="IPR002937">
    <property type="entry name" value="Amino_oxidase"/>
</dbReference>
<dbReference type="InterPro" id="IPR036188">
    <property type="entry name" value="FAD/NAD-bd_sf"/>
</dbReference>
<dbReference type="InterPro" id="IPR050281">
    <property type="entry name" value="Flavin_monoamine_oxidase"/>
</dbReference>
<dbReference type="PANTHER" id="PTHR10742">
    <property type="entry name" value="FLAVIN MONOAMINE OXIDASE"/>
    <property type="match status" value="1"/>
</dbReference>
<dbReference type="PANTHER" id="PTHR10742:SF405">
    <property type="entry name" value="PEROXISOMAL N(1)-ACETYL-SPERMINE_SPERMIDINE OXIDASE"/>
    <property type="match status" value="1"/>
</dbReference>
<dbReference type="Pfam" id="PF01593">
    <property type="entry name" value="Amino_oxidase"/>
    <property type="match status" value="1"/>
</dbReference>
<dbReference type="SUPFAM" id="SSF54373">
    <property type="entry name" value="FAD-linked reductases, C-terminal domain"/>
    <property type="match status" value="1"/>
</dbReference>
<dbReference type="SUPFAM" id="SSF51905">
    <property type="entry name" value="FAD/NAD(P)-binding domain"/>
    <property type="match status" value="1"/>
</dbReference>
<reference key="1">
    <citation type="submission" date="2005-05" db="EMBL/GenBank/DDBJ databases">
        <title>Comparative mapping of the bovine SPRN locus.</title>
        <authorList>
            <person name="Ferretti L."/>
            <person name="Uboldi C."/>
            <person name="Del Vecchio I."/>
            <person name="Eggen A."/>
            <person name="Brunner R."/>
            <person name="Iannuzzi L."/>
        </authorList>
    </citation>
    <scope>NUCLEOTIDE SEQUENCE [GENOMIC DNA / MRNA]</scope>
</reference>
<reference key="2">
    <citation type="journal article" date="2003" name="J. Biol. Chem.">
        <title>Cloning, sequencing, and heterologous expression of the murine peroxisomal flavoprotein, N(1)-acetylated polyamine oxidase.</title>
        <authorList>
            <person name="Wu T."/>
            <person name="Yankovskaya V."/>
            <person name="McIntire W.S."/>
        </authorList>
    </citation>
    <scope>NUCLEOTIDE SEQUENCE [MRNA] OF 62-512</scope>
    <scope>PROTEIN SEQUENCE OF 7-27; 57-76 AND 497-511</scope>
    <source>
        <tissue>Liver</tissue>
    </source>
</reference>